<feature type="chain" id="PRO_0000391922" description="Probable ATP-dependent RNA helicase spindle-E">
    <location>
        <begin position="1"/>
        <end position="1432"/>
    </location>
</feature>
<feature type="domain" description="Helicase ATP-binding" evidence="3">
    <location>
        <begin position="125"/>
        <end position="292"/>
    </location>
</feature>
<feature type="domain" description="Helicase C-terminal" evidence="4">
    <location>
        <begin position="342"/>
        <end position="525"/>
    </location>
</feature>
<feature type="domain" description="Tudor" evidence="2">
    <location>
        <begin position="936"/>
        <end position="999"/>
    </location>
</feature>
<feature type="short sequence motif" description="DEAH box">
    <location>
        <begin position="238"/>
        <end position="241"/>
    </location>
</feature>
<feature type="binding site" evidence="3">
    <location>
        <begin position="138"/>
        <end position="145"/>
    </location>
    <ligand>
        <name>ATP</name>
        <dbReference type="ChEBI" id="CHEBI:30616"/>
    </ligand>
</feature>
<comment type="function">
    <text evidence="1">Probable ATP-binding RNA helicase which plays a central role during spermatogenesis and oogenesis by repressing transposable elements and preventing their mobilization, which is essential for the germline integrity. Acts via the piRNA metabolic process, which mediates the repression of transposable elements during meiosis by forming complexes composed of piRNAs and Piwi and govern the methylation and subsequent repression of transposons. Involved in the repression of LTR retrotransposon copia. Also involved in telomere regulation by repressing specialized telomeric retroelements HeT-A, TAHRE, and TART; Drosophila telomeres being maintained by transposition of specialized telomeric retroelements. Involved in telomeric trans-silencing, a repression mechanism by which a transposon or a transgene inserted in subtelomeric heterochromatin has the capacity to repress in trans in the female germline, a homologous transposon, or transgene located in euchromatin. Involved in the repression of testis-expressed Stellate genes by the homologous Su(Ste) repeats. Required for anteroposterior and dorsoventral axis formation during oogenesis (By similarity).</text>
</comment>
<comment type="catalytic activity">
    <reaction>
        <text>ATP + H2O = ADP + phosphate + H(+)</text>
        <dbReference type="Rhea" id="RHEA:13065"/>
        <dbReference type="ChEBI" id="CHEBI:15377"/>
        <dbReference type="ChEBI" id="CHEBI:15378"/>
        <dbReference type="ChEBI" id="CHEBI:30616"/>
        <dbReference type="ChEBI" id="CHEBI:43474"/>
        <dbReference type="ChEBI" id="CHEBI:456216"/>
        <dbReference type="EC" id="3.6.4.13"/>
    </reaction>
</comment>
<comment type="subcellular location">
    <subcellularLocation>
        <location evidence="1">Cytoplasm</location>
    </subcellularLocation>
    <text evidence="1">Component of the nuage, also named P granule, a germ-cell-specific organelle required to repress transposon during meiosis.</text>
</comment>
<comment type="similarity">
    <text evidence="5">Belongs to the DEAD box helicase family. DEAH subfamily.</text>
</comment>
<accession>B4NBB0</accession>
<protein>
    <recommendedName>
        <fullName>Probable ATP-dependent RNA helicase spindle-E</fullName>
        <ecNumber>3.6.4.13</ecNumber>
    </recommendedName>
    <alternativeName>
        <fullName>Homeless</fullName>
    </alternativeName>
</protein>
<keyword id="KW-0067">ATP-binding</keyword>
<keyword id="KW-0963">Cytoplasm</keyword>
<keyword id="KW-0217">Developmental protein</keyword>
<keyword id="KW-0221">Differentiation</keyword>
<keyword id="KW-0347">Helicase</keyword>
<keyword id="KW-0378">Hydrolase</keyword>
<keyword id="KW-0469">Meiosis</keyword>
<keyword id="KW-0547">Nucleotide-binding</keyword>
<keyword id="KW-0896">Oogenesis</keyword>
<keyword id="KW-1185">Reference proteome</keyword>
<keyword id="KW-0943">RNA-mediated gene silencing</keyword>
<keyword id="KW-0744">Spermatogenesis</keyword>
<dbReference type="EC" id="3.6.4.13"/>
<dbReference type="EMBL" id="CH964232">
    <property type="protein sequence ID" value="EDW81074.1"/>
    <property type="molecule type" value="Genomic_DNA"/>
</dbReference>
<dbReference type="SMR" id="B4NBB0"/>
<dbReference type="STRING" id="7260.B4NBB0"/>
<dbReference type="EnsemblMetazoa" id="FBtr0241865">
    <property type="protein sequence ID" value="FBpp0240357"/>
    <property type="gene ID" value="FBgn0213225"/>
</dbReference>
<dbReference type="EnsemblMetazoa" id="XM_002070052.4">
    <property type="protein sequence ID" value="XP_002070088.1"/>
    <property type="gene ID" value="LOC6647243"/>
</dbReference>
<dbReference type="GeneID" id="6647243"/>
<dbReference type="KEGG" id="dwi:6647243"/>
<dbReference type="eggNOG" id="KOG0920">
    <property type="taxonomic scope" value="Eukaryota"/>
</dbReference>
<dbReference type="HOGENOM" id="CLU_002601_1_0_1"/>
<dbReference type="OMA" id="ETRLTYC"/>
<dbReference type="OrthoDB" id="66977at2759"/>
<dbReference type="PhylomeDB" id="B4NBB0"/>
<dbReference type="Proteomes" id="UP000007798">
    <property type="component" value="Unassembled WGS sequence"/>
</dbReference>
<dbReference type="GO" id="GO:0005634">
    <property type="term" value="C:nucleus"/>
    <property type="evidence" value="ECO:0007669"/>
    <property type="project" value="EnsemblMetazoa"/>
</dbReference>
<dbReference type="GO" id="GO:0043186">
    <property type="term" value="C:P granule"/>
    <property type="evidence" value="ECO:0007669"/>
    <property type="project" value="EnsemblMetazoa"/>
</dbReference>
<dbReference type="GO" id="GO:0005524">
    <property type="term" value="F:ATP binding"/>
    <property type="evidence" value="ECO:0007669"/>
    <property type="project" value="UniProtKB-KW"/>
</dbReference>
<dbReference type="GO" id="GO:0016887">
    <property type="term" value="F:ATP hydrolysis activity"/>
    <property type="evidence" value="ECO:0007669"/>
    <property type="project" value="RHEA"/>
</dbReference>
<dbReference type="GO" id="GO:0003723">
    <property type="term" value="F:RNA binding"/>
    <property type="evidence" value="ECO:0007669"/>
    <property type="project" value="TreeGrafter"/>
</dbReference>
<dbReference type="GO" id="GO:0003724">
    <property type="term" value="F:RNA helicase activity"/>
    <property type="evidence" value="ECO:0007669"/>
    <property type="project" value="UniProtKB-EC"/>
</dbReference>
<dbReference type="GO" id="GO:0046843">
    <property type="term" value="P:dorsal appendage formation"/>
    <property type="evidence" value="ECO:0007669"/>
    <property type="project" value="EnsemblMetazoa"/>
</dbReference>
<dbReference type="GO" id="GO:0007294">
    <property type="term" value="P:germarium-derived oocyte fate determination"/>
    <property type="evidence" value="ECO:0007669"/>
    <property type="project" value="EnsemblMetazoa"/>
</dbReference>
<dbReference type="GO" id="GO:0098795">
    <property type="term" value="P:global gene silencing by mRNA cleavage"/>
    <property type="evidence" value="ECO:0007669"/>
    <property type="project" value="EnsemblMetazoa"/>
</dbReference>
<dbReference type="GO" id="GO:0031507">
    <property type="term" value="P:heterochromatin formation"/>
    <property type="evidence" value="ECO:0007669"/>
    <property type="project" value="EnsemblMetazoa"/>
</dbReference>
<dbReference type="GO" id="GO:0008298">
    <property type="term" value="P:intracellular mRNA localization"/>
    <property type="evidence" value="ECO:0007669"/>
    <property type="project" value="EnsemblMetazoa"/>
</dbReference>
<dbReference type="GO" id="GO:0007076">
    <property type="term" value="P:mitotic chromosome condensation"/>
    <property type="evidence" value="ECO:0007669"/>
    <property type="project" value="EnsemblMetazoa"/>
</dbReference>
<dbReference type="GO" id="GO:0030717">
    <property type="term" value="P:oocyte karyosome formation"/>
    <property type="evidence" value="ECO:0007669"/>
    <property type="project" value="EnsemblMetazoa"/>
</dbReference>
<dbReference type="GO" id="GO:0030720">
    <property type="term" value="P:oocyte localization involved in germarium-derived egg chamber formation"/>
    <property type="evidence" value="ECO:0007669"/>
    <property type="project" value="EnsemblMetazoa"/>
</dbReference>
<dbReference type="GO" id="GO:0001556">
    <property type="term" value="P:oocyte maturation"/>
    <property type="evidence" value="ECO:0007669"/>
    <property type="project" value="EnsemblMetazoa"/>
</dbReference>
<dbReference type="GO" id="GO:0009949">
    <property type="term" value="P:polarity specification of anterior/posterior axis"/>
    <property type="evidence" value="ECO:0007669"/>
    <property type="project" value="EnsemblMetazoa"/>
</dbReference>
<dbReference type="GO" id="GO:0009951">
    <property type="term" value="P:polarity specification of dorsal/ventral axis"/>
    <property type="evidence" value="ECO:0007669"/>
    <property type="project" value="EnsemblMetazoa"/>
</dbReference>
<dbReference type="GO" id="GO:0007317">
    <property type="term" value="P:regulation of pole plasm oskar mRNA localization"/>
    <property type="evidence" value="ECO:0007669"/>
    <property type="project" value="EnsemblMetazoa"/>
</dbReference>
<dbReference type="GO" id="GO:0140965">
    <property type="term" value="P:secondary piRNA processing"/>
    <property type="evidence" value="ECO:0007669"/>
    <property type="project" value="EnsemblMetazoa"/>
</dbReference>
<dbReference type="GO" id="GO:0007283">
    <property type="term" value="P:spermatogenesis"/>
    <property type="evidence" value="ECO:0007669"/>
    <property type="project" value="UniProtKB-KW"/>
</dbReference>
<dbReference type="GO" id="GO:0141009">
    <property type="term" value="P:transposable element silencing by piRNA-mediated mRNA destabilization"/>
    <property type="evidence" value="ECO:0007669"/>
    <property type="project" value="EnsemblMetazoa"/>
</dbReference>
<dbReference type="CDD" id="cd18791">
    <property type="entry name" value="SF2_C_RHA"/>
    <property type="match status" value="1"/>
</dbReference>
<dbReference type="FunFam" id="3.40.50.300:FF:001676">
    <property type="entry name" value="DExH-box ATP-dependent RNA helicase DExH7 chloroplastic"/>
    <property type="match status" value="1"/>
</dbReference>
<dbReference type="Gene3D" id="1.20.120.1080">
    <property type="match status" value="1"/>
</dbReference>
<dbReference type="Gene3D" id="2.30.30.140">
    <property type="match status" value="1"/>
</dbReference>
<dbReference type="Gene3D" id="2.40.50.90">
    <property type="match status" value="1"/>
</dbReference>
<dbReference type="Gene3D" id="3.40.50.300">
    <property type="entry name" value="P-loop containing nucleotide triphosphate hydrolases"/>
    <property type="match status" value="2"/>
</dbReference>
<dbReference type="InterPro" id="IPR011545">
    <property type="entry name" value="DEAD/DEAH_box_helicase_dom"/>
</dbReference>
<dbReference type="InterPro" id="IPR007502">
    <property type="entry name" value="Helicase-assoc_dom"/>
</dbReference>
<dbReference type="InterPro" id="IPR014001">
    <property type="entry name" value="Helicase_ATP-bd"/>
</dbReference>
<dbReference type="InterPro" id="IPR001650">
    <property type="entry name" value="Helicase_C-like"/>
</dbReference>
<dbReference type="InterPro" id="IPR027417">
    <property type="entry name" value="P-loop_NTPase"/>
</dbReference>
<dbReference type="InterPro" id="IPR035437">
    <property type="entry name" value="SNase_OB-fold_sf"/>
</dbReference>
<dbReference type="InterPro" id="IPR002999">
    <property type="entry name" value="Tudor"/>
</dbReference>
<dbReference type="InterPro" id="IPR013087">
    <property type="entry name" value="Znf_C2H2_type"/>
</dbReference>
<dbReference type="PANTHER" id="PTHR18934">
    <property type="entry name" value="ATP-DEPENDENT RNA HELICASE"/>
    <property type="match status" value="1"/>
</dbReference>
<dbReference type="PANTHER" id="PTHR18934:SF113">
    <property type="entry name" value="ATP-DEPENDENT RNA HELICASE TDRD9"/>
    <property type="match status" value="1"/>
</dbReference>
<dbReference type="Pfam" id="PF00270">
    <property type="entry name" value="DEAD"/>
    <property type="match status" value="1"/>
</dbReference>
<dbReference type="Pfam" id="PF21010">
    <property type="entry name" value="HA2_C"/>
    <property type="match status" value="1"/>
</dbReference>
<dbReference type="Pfam" id="PF00271">
    <property type="entry name" value="Helicase_C"/>
    <property type="match status" value="1"/>
</dbReference>
<dbReference type="Pfam" id="PF00567">
    <property type="entry name" value="TUDOR"/>
    <property type="match status" value="1"/>
</dbReference>
<dbReference type="SMART" id="SM00487">
    <property type="entry name" value="DEXDc"/>
    <property type="match status" value="1"/>
</dbReference>
<dbReference type="SMART" id="SM00847">
    <property type="entry name" value="HA2"/>
    <property type="match status" value="1"/>
</dbReference>
<dbReference type="SMART" id="SM00490">
    <property type="entry name" value="HELICc"/>
    <property type="match status" value="1"/>
</dbReference>
<dbReference type="SUPFAM" id="SSF52540">
    <property type="entry name" value="P-loop containing nucleoside triphosphate hydrolases"/>
    <property type="match status" value="1"/>
</dbReference>
<dbReference type="SUPFAM" id="SSF63748">
    <property type="entry name" value="Tudor/PWWP/MBT"/>
    <property type="match status" value="1"/>
</dbReference>
<dbReference type="PROSITE" id="PS51192">
    <property type="entry name" value="HELICASE_ATP_BIND_1"/>
    <property type="match status" value="1"/>
</dbReference>
<dbReference type="PROSITE" id="PS51194">
    <property type="entry name" value="HELICASE_CTER"/>
    <property type="match status" value="1"/>
</dbReference>
<dbReference type="PROSITE" id="PS50304">
    <property type="entry name" value="TUDOR"/>
    <property type="match status" value="1"/>
</dbReference>
<evidence type="ECO:0000250" key="1"/>
<evidence type="ECO:0000255" key="2">
    <source>
        <dbReference type="PROSITE-ProRule" id="PRU00211"/>
    </source>
</evidence>
<evidence type="ECO:0000255" key="3">
    <source>
        <dbReference type="PROSITE-ProRule" id="PRU00541"/>
    </source>
</evidence>
<evidence type="ECO:0000255" key="4">
    <source>
        <dbReference type="PROSITE-ProRule" id="PRU00542"/>
    </source>
</evidence>
<evidence type="ECO:0000305" key="5"/>
<organism>
    <name type="scientific">Drosophila willistoni</name>
    <name type="common">Fruit fly</name>
    <dbReference type="NCBI Taxonomy" id="7260"/>
    <lineage>
        <taxon>Eukaryota</taxon>
        <taxon>Metazoa</taxon>
        <taxon>Ecdysozoa</taxon>
        <taxon>Arthropoda</taxon>
        <taxon>Hexapoda</taxon>
        <taxon>Insecta</taxon>
        <taxon>Pterygota</taxon>
        <taxon>Neoptera</taxon>
        <taxon>Endopterygota</taxon>
        <taxon>Diptera</taxon>
        <taxon>Brachycera</taxon>
        <taxon>Muscomorpha</taxon>
        <taxon>Ephydroidea</taxon>
        <taxon>Drosophilidae</taxon>
        <taxon>Drosophila</taxon>
        <taxon>Sophophora</taxon>
    </lineage>
</organism>
<proteinExistence type="inferred from homology"/>
<gene>
    <name type="primary">spn-E</name>
    <name type="synonym">hls</name>
    <name type="ORF">GK11214</name>
</gene>
<reference key="1">
    <citation type="journal article" date="2007" name="Nature">
        <title>Evolution of genes and genomes on the Drosophila phylogeny.</title>
        <authorList>
            <consortium name="Drosophila 12 genomes consortium"/>
        </authorList>
    </citation>
    <scope>NUCLEOTIDE SEQUENCE [LARGE SCALE GENOMIC DNA]</scope>
    <source>
        <strain>Tucson 14030-0811.24</strain>
    </source>
</reference>
<name>SPNE_DROWI</name>
<sequence length="1432" mass="164853">MDEDLMGFFDFSKEFKRTEAPKGCISSNFVGLGTEKEKTKPPKQENLGTEYVKEIVDREKQNLESLGIGGSAAKRNRTLDDIDSDNEECYEAPDLRLDEEFYSKYYFDLNRDKTLPIYTQRDQIMKAIRENTVVILKGETGCGKTTQVPQYIIDEAYQNRQYCNIVVTQPRRIAAISIANRVSQERHWEPGTVCSYQVGLHRQSGSEDARLLYCTTGVLLNFLINHKTLTHYTHIVLDEVHERDQEMDFLLIVVRRLLATNSRHVKVILMSATIDSREFVQYFATKNGIPPVINASHGRKYPLVKFYRDQLKNMQWQEDQPNPDEPGMGSHGYSAAIKILLVIDNMERRTEGQSQRSYEENLKTGSVLIFLPGINEIDNMAESIDHVMQENPALKVSIIRCHSLMTPDSQRDVFASPPVGYRKIILTTNIAESSITVPDVSYVIDFCLAKVLVTDTATNFSSLRLVWASKSNCRQRAGRVGRLRSGRVYRMVPKSFYMKHMLEFGVPEMLRSPLESSVLKAKELNMGPPIEMLALALSPPKLSDIRNTILLLKEVGALYPTVDGNYVELDGDLTPWGSIMTRLPLDIRLSRLVLLGYVFNCLDEAIVMAAGLSVRGLYLQEAGFQSYEAYWMHYVFADGSSSDLVAIWRFYKTYLNMCENRIMQESAAQWARRYHISLRSLKEMHLLVQELQYRCNKLRLHPVQLQSCQIKDDRERALILKILIAGAFYPNYFIRSNKFNPDYGRNTYQVLGGYDPCRTVYFTHFEPRYMGELYTRRIKDLFSEAKIPPENMDVNFQVGSEKIFVTFKQTEDEMDQLNLIQVPGRILTDVYKAVRLRIGKQYRPIRVMELPHAIQYVQENKIGTVIEGQWHPPSKPFNAGLMALPSVYDKNMIGYITHIVSCGKFFFQPLELADSITNMSEHINSPKNLSHYVVDAGSITKNLKLLAKRVDDFQRAQVIRVETHSHQYPKFRVRFIDYGDIAVVPMDQLRFMSNQLKREYDDLPPRCFECRLALVQPAALTSNYNRWPIKANEMVRKIAMDGRVEMEIYSLVNNVAAVFIKMREGVLNDKLVEKNYARRSDEDFASIQDHDFRLRKQERSFHVPRAERKQVNEEYLRVSRLPQDADLSPPPMHKCQTVVRLKGPYSPLEASMFSTIRASACKTVRIDPLSVNSVLLDSNPQDRHDQLIVSASVTTSNNNQVLTVRGSTVMPNTHGFGALMALIFCPTVQIKCNKECTKFVSLLAGLGYNPETMEPYYEDHDVVMNLDVNLLEDDVRLINQMRYNIDTIFFKYEGEDAPAVSEGDRSIVFNQLRCLLSRLLSKDRCYIEPHSSNLDNVWEKLDNLEPQSEPYGKRAIFPMHTIPELQNEDTTARLVLQENCKRLYSWRTFDGVLQPLDCKLCNQRLETVSQLRLHLLSQLHRDREKQIGFQDN</sequence>